<feature type="chain" id="PRO_1000204264" description="Shikimate dehydrogenase (NADP(+))">
    <location>
        <begin position="1"/>
        <end position="261"/>
    </location>
</feature>
<feature type="active site" description="Proton acceptor" evidence="1">
    <location>
        <position position="64"/>
    </location>
</feature>
<feature type="binding site" evidence="1">
    <location>
        <begin position="13"/>
        <end position="15"/>
    </location>
    <ligand>
        <name>shikimate</name>
        <dbReference type="ChEBI" id="CHEBI:36208"/>
    </ligand>
</feature>
<feature type="binding site" evidence="1">
    <location>
        <position position="60"/>
    </location>
    <ligand>
        <name>shikimate</name>
        <dbReference type="ChEBI" id="CHEBI:36208"/>
    </ligand>
</feature>
<feature type="binding site" evidence="1">
    <location>
        <position position="76"/>
    </location>
    <ligand>
        <name>NADP(+)</name>
        <dbReference type="ChEBI" id="CHEBI:58349"/>
    </ligand>
</feature>
<feature type="binding site" evidence="1">
    <location>
        <position position="85"/>
    </location>
    <ligand>
        <name>shikimate</name>
        <dbReference type="ChEBI" id="CHEBI:36208"/>
    </ligand>
</feature>
<feature type="binding site" evidence="1">
    <location>
        <position position="100"/>
    </location>
    <ligand>
        <name>shikimate</name>
        <dbReference type="ChEBI" id="CHEBI:36208"/>
    </ligand>
</feature>
<feature type="binding site" evidence="1">
    <location>
        <begin position="122"/>
        <end position="126"/>
    </location>
    <ligand>
        <name>NADP(+)</name>
        <dbReference type="ChEBI" id="CHEBI:58349"/>
    </ligand>
</feature>
<feature type="binding site" evidence="1">
    <location>
        <begin position="143"/>
        <end position="148"/>
    </location>
    <ligand>
        <name>NADP(+)</name>
        <dbReference type="ChEBI" id="CHEBI:58349"/>
    </ligand>
</feature>
<feature type="binding site" evidence="1">
    <location>
        <position position="203"/>
    </location>
    <ligand>
        <name>NADP(+)</name>
        <dbReference type="ChEBI" id="CHEBI:58349"/>
    </ligand>
</feature>
<feature type="binding site" evidence="1">
    <location>
        <position position="205"/>
    </location>
    <ligand>
        <name>shikimate</name>
        <dbReference type="ChEBI" id="CHEBI:36208"/>
    </ligand>
</feature>
<feature type="binding site" evidence="1">
    <location>
        <position position="226"/>
    </location>
    <ligand>
        <name>NADP(+)</name>
        <dbReference type="ChEBI" id="CHEBI:58349"/>
    </ligand>
</feature>
<dbReference type="EC" id="1.1.1.25" evidence="1"/>
<dbReference type="EMBL" id="CP001615">
    <property type="protein sequence ID" value="ACQ71437.1"/>
    <property type="molecule type" value="Genomic_DNA"/>
</dbReference>
<dbReference type="RefSeq" id="WP_015880996.1">
    <property type="nucleotide sequence ID" value="NC_012673.1"/>
</dbReference>
<dbReference type="SMR" id="C4L3U2"/>
<dbReference type="STRING" id="360911.EAT1b_2517"/>
<dbReference type="KEGG" id="eat:EAT1b_2517"/>
<dbReference type="eggNOG" id="COG0169">
    <property type="taxonomic scope" value="Bacteria"/>
</dbReference>
<dbReference type="HOGENOM" id="CLU_044063_0_1_9"/>
<dbReference type="OrthoDB" id="9792692at2"/>
<dbReference type="UniPathway" id="UPA00053">
    <property type="reaction ID" value="UER00087"/>
</dbReference>
<dbReference type="Proteomes" id="UP000000716">
    <property type="component" value="Chromosome"/>
</dbReference>
<dbReference type="GO" id="GO:0005829">
    <property type="term" value="C:cytosol"/>
    <property type="evidence" value="ECO:0007669"/>
    <property type="project" value="TreeGrafter"/>
</dbReference>
<dbReference type="GO" id="GO:0050661">
    <property type="term" value="F:NADP binding"/>
    <property type="evidence" value="ECO:0007669"/>
    <property type="project" value="InterPro"/>
</dbReference>
<dbReference type="GO" id="GO:0004764">
    <property type="term" value="F:shikimate 3-dehydrogenase (NADP+) activity"/>
    <property type="evidence" value="ECO:0007669"/>
    <property type="project" value="UniProtKB-UniRule"/>
</dbReference>
<dbReference type="GO" id="GO:0008652">
    <property type="term" value="P:amino acid biosynthetic process"/>
    <property type="evidence" value="ECO:0007669"/>
    <property type="project" value="UniProtKB-KW"/>
</dbReference>
<dbReference type="GO" id="GO:0009073">
    <property type="term" value="P:aromatic amino acid family biosynthetic process"/>
    <property type="evidence" value="ECO:0007669"/>
    <property type="project" value="UniProtKB-KW"/>
</dbReference>
<dbReference type="GO" id="GO:0009423">
    <property type="term" value="P:chorismate biosynthetic process"/>
    <property type="evidence" value="ECO:0007669"/>
    <property type="project" value="UniProtKB-UniRule"/>
</dbReference>
<dbReference type="GO" id="GO:0019632">
    <property type="term" value="P:shikimate metabolic process"/>
    <property type="evidence" value="ECO:0007669"/>
    <property type="project" value="InterPro"/>
</dbReference>
<dbReference type="CDD" id="cd01065">
    <property type="entry name" value="NAD_bind_Shikimate_DH"/>
    <property type="match status" value="1"/>
</dbReference>
<dbReference type="Gene3D" id="3.40.50.10860">
    <property type="entry name" value="Leucine Dehydrogenase, chain A, domain 1"/>
    <property type="match status" value="1"/>
</dbReference>
<dbReference type="Gene3D" id="3.40.50.720">
    <property type="entry name" value="NAD(P)-binding Rossmann-like Domain"/>
    <property type="match status" value="1"/>
</dbReference>
<dbReference type="HAMAP" id="MF_00222">
    <property type="entry name" value="Shikimate_DH_AroE"/>
    <property type="match status" value="1"/>
</dbReference>
<dbReference type="InterPro" id="IPR046346">
    <property type="entry name" value="Aminoacid_DH-like_N_sf"/>
</dbReference>
<dbReference type="InterPro" id="IPR036291">
    <property type="entry name" value="NAD(P)-bd_dom_sf"/>
</dbReference>
<dbReference type="InterPro" id="IPR041121">
    <property type="entry name" value="SDH_C"/>
</dbReference>
<dbReference type="InterPro" id="IPR011342">
    <property type="entry name" value="Shikimate_DH"/>
</dbReference>
<dbReference type="InterPro" id="IPR013708">
    <property type="entry name" value="Shikimate_DH-bd_N"/>
</dbReference>
<dbReference type="InterPro" id="IPR022893">
    <property type="entry name" value="Shikimate_DH_fam"/>
</dbReference>
<dbReference type="InterPro" id="IPR006151">
    <property type="entry name" value="Shikm_DH/Glu-tRNA_Rdtase"/>
</dbReference>
<dbReference type="NCBIfam" id="TIGR00507">
    <property type="entry name" value="aroE"/>
    <property type="match status" value="1"/>
</dbReference>
<dbReference type="PANTHER" id="PTHR21089:SF1">
    <property type="entry name" value="BIFUNCTIONAL 3-DEHYDROQUINATE DEHYDRATASE_SHIKIMATE DEHYDROGENASE, CHLOROPLASTIC"/>
    <property type="match status" value="1"/>
</dbReference>
<dbReference type="PANTHER" id="PTHR21089">
    <property type="entry name" value="SHIKIMATE DEHYDROGENASE"/>
    <property type="match status" value="1"/>
</dbReference>
<dbReference type="Pfam" id="PF18317">
    <property type="entry name" value="SDH_C"/>
    <property type="match status" value="1"/>
</dbReference>
<dbReference type="Pfam" id="PF01488">
    <property type="entry name" value="Shikimate_DH"/>
    <property type="match status" value="1"/>
</dbReference>
<dbReference type="Pfam" id="PF08501">
    <property type="entry name" value="Shikimate_dh_N"/>
    <property type="match status" value="1"/>
</dbReference>
<dbReference type="SUPFAM" id="SSF53223">
    <property type="entry name" value="Aminoacid dehydrogenase-like, N-terminal domain"/>
    <property type="match status" value="1"/>
</dbReference>
<dbReference type="SUPFAM" id="SSF51735">
    <property type="entry name" value="NAD(P)-binding Rossmann-fold domains"/>
    <property type="match status" value="1"/>
</dbReference>
<protein>
    <recommendedName>
        <fullName evidence="1">Shikimate dehydrogenase (NADP(+))</fullName>
        <shortName evidence="1">SDH</shortName>
        <ecNumber evidence="1">1.1.1.25</ecNumber>
    </recommendedName>
</protein>
<comment type="function">
    <text evidence="1">Involved in the biosynthesis of the chorismate, which leads to the biosynthesis of aromatic amino acids. Catalyzes the reversible NADPH linked reduction of 3-dehydroshikimate (DHSA) to yield shikimate (SA).</text>
</comment>
<comment type="catalytic activity">
    <reaction evidence="1">
        <text>shikimate + NADP(+) = 3-dehydroshikimate + NADPH + H(+)</text>
        <dbReference type="Rhea" id="RHEA:17737"/>
        <dbReference type="ChEBI" id="CHEBI:15378"/>
        <dbReference type="ChEBI" id="CHEBI:16630"/>
        <dbReference type="ChEBI" id="CHEBI:36208"/>
        <dbReference type="ChEBI" id="CHEBI:57783"/>
        <dbReference type="ChEBI" id="CHEBI:58349"/>
        <dbReference type="EC" id="1.1.1.25"/>
    </reaction>
</comment>
<comment type="pathway">
    <text evidence="1">Metabolic intermediate biosynthesis; chorismate biosynthesis; chorismate from D-erythrose 4-phosphate and phosphoenolpyruvate: step 4/7.</text>
</comment>
<comment type="subunit">
    <text evidence="1">Homodimer.</text>
</comment>
<comment type="similarity">
    <text evidence="1">Belongs to the shikimate dehydrogenase family.</text>
</comment>
<reference key="1">
    <citation type="journal article" date="2011" name="J. Bacteriol.">
        <title>Complete genome sequence of the Thermophilic Bacterium Exiguobacterium sp. AT1b.</title>
        <authorList>
            <person name="Vishnivetskaya T.A."/>
            <person name="Lucas S."/>
            <person name="Copeland A."/>
            <person name="Lapidus A."/>
            <person name="Glavina del Rio T."/>
            <person name="Dalin E."/>
            <person name="Tice H."/>
            <person name="Bruce D.C."/>
            <person name="Goodwin L.A."/>
            <person name="Pitluck S."/>
            <person name="Saunders E."/>
            <person name="Brettin T."/>
            <person name="Detter C."/>
            <person name="Han C."/>
            <person name="Larimer F."/>
            <person name="Land M.L."/>
            <person name="Hauser L.J."/>
            <person name="Kyrpides N.C."/>
            <person name="Ovchinnikova G."/>
            <person name="Kathariou S."/>
            <person name="Ramaley R.F."/>
            <person name="Rodrigues D.F."/>
            <person name="Hendrix C."/>
            <person name="Richardson P."/>
            <person name="Tiedje J.M."/>
        </authorList>
    </citation>
    <scope>NUCLEOTIDE SEQUENCE [LARGE SCALE GENOMIC DNA]</scope>
    <source>
        <strain>ATCC BAA-1283 / AT1b</strain>
    </source>
</reference>
<name>AROE_EXISA</name>
<gene>
    <name evidence="1" type="primary">aroE</name>
    <name type="ordered locus">EAT1b_2517</name>
</gene>
<accession>C4L3U2</accession>
<proteinExistence type="inferred from homology"/>
<organism>
    <name type="scientific">Exiguobacterium sp. (strain ATCC BAA-1283 / AT1b)</name>
    <dbReference type="NCBI Taxonomy" id="360911"/>
    <lineage>
        <taxon>Bacteria</taxon>
        <taxon>Bacillati</taxon>
        <taxon>Bacillota</taxon>
        <taxon>Bacilli</taxon>
        <taxon>Bacillales</taxon>
        <taxon>Bacillales Family XII. Incertae Sedis</taxon>
        <taxon>Exiguobacterium</taxon>
    </lineage>
</organism>
<sequence length="261" mass="28433">MNLAVIGHPIAHSLSPQLHEQWLRASGLFGRYEAIDATPDQLPALFAAMREGDWDGFNVTIPYKEVVVRYLDDLDEAAKHAGAVNTVYKRDGRLIGTNTDGAGLVQALMPYTDFRGHVLIVGAGGAARGIVQALPTRDVTIVNRTVERAKALADTFGVVYTTFDEMDVSRYDVIIQTTSVGMDERSTPLSLEGLRQNTVVCDIIYRPLVTPMLQEAKSRGANIVTGVAMFVGQGALSFEKWTGVKPDETVGKKLIEGLLEE</sequence>
<keyword id="KW-0028">Amino-acid biosynthesis</keyword>
<keyword id="KW-0057">Aromatic amino acid biosynthesis</keyword>
<keyword id="KW-0521">NADP</keyword>
<keyword id="KW-0560">Oxidoreductase</keyword>
<evidence type="ECO:0000255" key="1">
    <source>
        <dbReference type="HAMAP-Rule" id="MF_00222"/>
    </source>
</evidence>